<name>RUTA_BRASB</name>
<keyword id="KW-0285">Flavoprotein</keyword>
<keyword id="KW-0288">FMN</keyword>
<keyword id="KW-0503">Monooxygenase</keyword>
<keyword id="KW-0521">NADP</keyword>
<keyword id="KW-0560">Oxidoreductase</keyword>
<keyword id="KW-1185">Reference proteome</keyword>
<evidence type="ECO:0000255" key="1">
    <source>
        <dbReference type="HAMAP-Rule" id="MF_01699"/>
    </source>
</evidence>
<protein>
    <recommendedName>
        <fullName evidence="1">Pyrimidine monooxygenase RutA</fullName>
        <ecNumber evidence="1">1.14.99.46</ecNumber>
    </recommendedName>
</protein>
<sequence length="360" mass="39219">MDLGVFIPIGNNGWLISTASPQYKPTFELNKQIVQRAEHYGFEFALSMIKLRGFGGKSEFWDYNLESFTLMAGLAAVTSRIKLFASTAVLTLPPAIVARMATTIDSISGGRFGINIVSGWAKAEYEQMGLWPGDDYFGYRYAYSTEYVQVMQELWRTGASDFKGKYFQMTDCHMKPLPAHKIEIVAAGQSPTGMAFAATYADYNFVLASGVNTPTAHVKLNEQLLDAVAKTGRDVGAYVLFMVIADETDEAAMAKWQAYKDGTDVDALVWMADQGSKDQSAAGSSTAKTINLPEQALNFNMGTIVGSYATVARLLDEAASVPGTKGLMLTFDDFVQGIESFGQHVQPLMTSRAARLLPAA</sequence>
<reference key="1">
    <citation type="journal article" date="2007" name="Science">
        <title>Legumes symbioses: absence of nod genes in photosynthetic bradyrhizobia.</title>
        <authorList>
            <person name="Giraud E."/>
            <person name="Moulin L."/>
            <person name="Vallenet D."/>
            <person name="Barbe V."/>
            <person name="Cytryn E."/>
            <person name="Avarre J.-C."/>
            <person name="Jaubert M."/>
            <person name="Simon D."/>
            <person name="Cartieaux F."/>
            <person name="Prin Y."/>
            <person name="Bena G."/>
            <person name="Hannibal L."/>
            <person name="Fardoux J."/>
            <person name="Kojadinovic M."/>
            <person name="Vuillet L."/>
            <person name="Lajus A."/>
            <person name="Cruveiller S."/>
            <person name="Rouy Z."/>
            <person name="Mangenot S."/>
            <person name="Segurens B."/>
            <person name="Dossat C."/>
            <person name="Franck W.L."/>
            <person name="Chang W.-S."/>
            <person name="Saunders E."/>
            <person name="Bruce D."/>
            <person name="Richardson P."/>
            <person name="Normand P."/>
            <person name="Dreyfus B."/>
            <person name="Pignol D."/>
            <person name="Stacey G."/>
            <person name="Emerich D."/>
            <person name="Vermeglio A."/>
            <person name="Medigue C."/>
            <person name="Sadowsky M."/>
        </authorList>
    </citation>
    <scope>NUCLEOTIDE SEQUENCE [LARGE SCALE GENOMIC DNA]</scope>
    <source>
        <strain>BTAi1 / ATCC BAA-1182</strain>
    </source>
</reference>
<feature type="chain" id="PRO_0000402585" description="Pyrimidine monooxygenase RutA">
    <location>
        <begin position="1"/>
        <end position="360"/>
    </location>
</feature>
<feature type="binding site" evidence="1">
    <location>
        <begin position="49"/>
        <end position="50"/>
    </location>
    <ligand>
        <name>FMN</name>
        <dbReference type="ChEBI" id="CHEBI:58210"/>
    </ligand>
</feature>
<feature type="binding site" evidence="1">
    <location>
        <position position="115"/>
    </location>
    <ligand>
        <name>FMN</name>
        <dbReference type="ChEBI" id="CHEBI:58210"/>
    </ligand>
</feature>
<feature type="binding site" evidence="1">
    <location>
        <position position="124"/>
    </location>
    <ligand>
        <name>FMN</name>
        <dbReference type="ChEBI" id="CHEBI:58210"/>
    </ligand>
</feature>
<feature type="binding site" evidence="1">
    <location>
        <begin position="140"/>
        <end position="141"/>
    </location>
    <ligand>
        <name>FMN</name>
        <dbReference type="ChEBI" id="CHEBI:58210"/>
    </ligand>
</feature>
<feature type="binding site" evidence="1">
    <location>
        <position position="190"/>
    </location>
    <ligand>
        <name>FMN</name>
        <dbReference type="ChEBI" id="CHEBI:58210"/>
    </ligand>
</feature>
<organism>
    <name type="scientific">Bradyrhizobium sp. (strain BTAi1 / ATCC BAA-1182)</name>
    <dbReference type="NCBI Taxonomy" id="288000"/>
    <lineage>
        <taxon>Bacteria</taxon>
        <taxon>Pseudomonadati</taxon>
        <taxon>Pseudomonadota</taxon>
        <taxon>Alphaproteobacteria</taxon>
        <taxon>Hyphomicrobiales</taxon>
        <taxon>Nitrobacteraceae</taxon>
        <taxon>Bradyrhizobium</taxon>
    </lineage>
</organism>
<dbReference type="EC" id="1.14.99.46" evidence="1"/>
<dbReference type="EMBL" id="CP000494">
    <property type="protein sequence ID" value="ABQ33377.1"/>
    <property type="molecule type" value="Genomic_DNA"/>
</dbReference>
<dbReference type="RefSeq" id="WP_012041424.1">
    <property type="nucleotide sequence ID" value="NC_009485.1"/>
</dbReference>
<dbReference type="SMR" id="A5EB33"/>
<dbReference type="STRING" id="288000.BBta_1128"/>
<dbReference type="KEGG" id="bbt:BBta_1128"/>
<dbReference type="eggNOG" id="COG2141">
    <property type="taxonomic scope" value="Bacteria"/>
</dbReference>
<dbReference type="HOGENOM" id="CLU_027853_1_1_5"/>
<dbReference type="OrthoDB" id="9814695at2"/>
<dbReference type="Proteomes" id="UP000000246">
    <property type="component" value="Chromosome"/>
</dbReference>
<dbReference type="GO" id="GO:0008726">
    <property type="term" value="F:alkanesulfonate monooxygenase activity"/>
    <property type="evidence" value="ECO:0007669"/>
    <property type="project" value="TreeGrafter"/>
</dbReference>
<dbReference type="GO" id="GO:0052614">
    <property type="term" value="F:uracil oxygenase activity"/>
    <property type="evidence" value="ECO:0007669"/>
    <property type="project" value="UniProtKB-EC"/>
</dbReference>
<dbReference type="GO" id="GO:0046306">
    <property type="term" value="P:alkanesulfonate catabolic process"/>
    <property type="evidence" value="ECO:0007669"/>
    <property type="project" value="TreeGrafter"/>
</dbReference>
<dbReference type="GO" id="GO:0019740">
    <property type="term" value="P:nitrogen utilization"/>
    <property type="evidence" value="ECO:0007669"/>
    <property type="project" value="UniProtKB-UniRule"/>
</dbReference>
<dbReference type="GO" id="GO:0006212">
    <property type="term" value="P:uracil catabolic process"/>
    <property type="evidence" value="ECO:0007669"/>
    <property type="project" value="UniProtKB-UniRule"/>
</dbReference>
<dbReference type="CDD" id="cd01094">
    <property type="entry name" value="Alkanesulfonate_monoxygenase"/>
    <property type="match status" value="1"/>
</dbReference>
<dbReference type="Gene3D" id="3.20.20.30">
    <property type="entry name" value="Luciferase-like domain"/>
    <property type="match status" value="1"/>
</dbReference>
<dbReference type="HAMAP" id="MF_01699">
    <property type="entry name" value="RutA"/>
    <property type="match status" value="1"/>
</dbReference>
<dbReference type="InterPro" id="IPR011251">
    <property type="entry name" value="Luciferase-like_dom"/>
</dbReference>
<dbReference type="InterPro" id="IPR036661">
    <property type="entry name" value="Luciferase-like_sf"/>
</dbReference>
<dbReference type="InterPro" id="IPR019914">
    <property type="entry name" value="Pyrimidine_monooxygenase_RutA"/>
</dbReference>
<dbReference type="InterPro" id="IPR050172">
    <property type="entry name" value="SsuD_RutA_monooxygenase"/>
</dbReference>
<dbReference type="NCBIfam" id="TIGR03612">
    <property type="entry name" value="RutA"/>
    <property type="match status" value="1"/>
</dbReference>
<dbReference type="PANTHER" id="PTHR42847">
    <property type="entry name" value="ALKANESULFONATE MONOOXYGENASE"/>
    <property type="match status" value="1"/>
</dbReference>
<dbReference type="PANTHER" id="PTHR42847:SF4">
    <property type="entry name" value="ALKANESULFONATE MONOOXYGENASE-RELATED"/>
    <property type="match status" value="1"/>
</dbReference>
<dbReference type="Pfam" id="PF00296">
    <property type="entry name" value="Bac_luciferase"/>
    <property type="match status" value="1"/>
</dbReference>
<dbReference type="SUPFAM" id="SSF51679">
    <property type="entry name" value="Bacterial luciferase-like"/>
    <property type="match status" value="1"/>
</dbReference>
<proteinExistence type="inferred from homology"/>
<accession>A5EB33</accession>
<comment type="function">
    <text evidence="1">Catalyzes the pyrimidine ring opening between N-3 and C-4 by an unusual flavin hydroperoxide-catalyzed mechanism, adding oxygen atoms in the process to yield ureidoacrylate peracid, that immediately reacts with FMN forming ureidoacrylate and FMN-N(5)-oxide. The FMN-N(5)-oxide reacts spontaneously with NADH to produce FMN. Requires the flavin reductase RutF to regenerate FMN in vivo.</text>
</comment>
<comment type="catalytic activity">
    <reaction evidence="1">
        <text>uracil + FMNH2 + NADH + O2 = (Z)-3-ureidoacrylate + FMN + NAD(+) + H2O + H(+)</text>
        <dbReference type="Rhea" id="RHEA:31587"/>
        <dbReference type="ChEBI" id="CHEBI:15377"/>
        <dbReference type="ChEBI" id="CHEBI:15378"/>
        <dbReference type="ChEBI" id="CHEBI:15379"/>
        <dbReference type="ChEBI" id="CHEBI:17568"/>
        <dbReference type="ChEBI" id="CHEBI:57540"/>
        <dbReference type="ChEBI" id="CHEBI:57618"/>
        <dbReference type="ChEBI" id="CHEBI:57945"/>
        <dbReference type="ChEBI" id="CHEBI:58210"/>
        <dbReference type="ChEBI" id="CHEBI:59891"/>
        <dbReference type="EC" id="1.14.99.46"/>
    </reaction>
</comment>
<comment type="catalytic activity">
    <reaction evidence="1">
        <text>thymine + FMNH2 + NADH + O2 = (Z)-2-methylureidoacrylate + FMN + NAD(+) + H2O + H(+)</text>
        <dbReference type="Rhea" id="RHEA:31599"/>
        <dbReference type="ChEBI" id="CHEBI:15377"/>
        <dbReference type="ChEBI" id="CHEBI:15378"/>
        <dbReference type="ChEBI" id="CHEBI:15379"/>
        <dbReference type="ChEBI" id="CHEBI:17821"/>
        <dbReference type="ChEBI" id="CHEBI:57540"/>
        <dbReference type="ChEBI" id="CHEBI:57618"/>
        <dbReference type="ChEBI" id="CHEBI:57945"/>
        <dbReference type="ChEBI" id="CHEBI:58210"/>
        <dbReference type="ChEBI" id="CHEBI:143783"/>
        <dbReference type="EC" id="1.14.99.46"/>
    </reaction>
</comment>
<comment type="similarity">
    <text evidence="1">Belongs to the NtaA/SnaA/DszA monooxygenase family. RutA subfamily.</text>
</comment>
<gene>
    <name evidence="1" type="primary">rutA</name>
    <name type="ordered locus">BBta_1128</name>
</gene>